<name>YIGZ_ECOLI</name>
<reference key="1">
    <citation type="journal article" date="1990" name="Nucleic Acids Res.">
        <title>Nucleotide sequence between the fadB gene and the rrnA operon from Escherichia coli.</title>
        <authorList>
            <person name="Nakahigashi K."/>
            <person name="Inokuchi H."/>
        </authorList>
    </citation>
    <scope>NUCLEOTIDE SEQUENCE [GENOMIC DNA]</scope>
    <source>
        <strain>K12</strain>
    </source>
</reference>
<reference key="2">
    <citation type="journal article" date="1992" name="Science">
        <title>Analysis of the Escherichia coli genome: DNA sequence of the region from 84.5 to 86.5 minutes.</title>
        <authorList>
            <person name="Daniels D.L."/>
            <person name="Plunkett G. III"/>
            <person name="Burland V.D."/>
            <person name="Blattner F.R."/>
        </authorList>
    </citation>
    <scope>NUCLEOTIDE SEQUENCE [LARGE SCALE GENOMIC DNA]</scope>
    <source>
        <strain>K12 / MG1655 / ATCC 47076</strain>
    </source>
</reference>
<reference key="3">
    <citation type="journal article" date="1997" name="Science">
        <title>The complete genome sequence of Escherichia coli K-12.</title>
        <authorList>
            <person name="Blattner F.R."/>
            <person name="Plunkett G. III"/>
            <person name="Bloch C.A."/>
            <person name="Perna N.T."/>
            <person name="Burland V."/>
            <person name="Riley M."/>
            <person name="Collado-Vides J."/>
            <person name="Glasner J.D."/>
            <person name="Rode C.K."/>
            <person name="Mayhew G.F."/>
            <person name="Gregor J."/>
            <person name="Davis N.W."/>
            <person name="Kirkpatrick H.A."/>
            <person name="Goeden M.A."/>
            <person name="Rose D.J."/>
            <person name="Mau B."/>
            <person name="Shao Y."/>
        </authorList>
    </citation>
    <scope>NUCLEOTIDE SEQUENCE [LARGE SCALE GENOMIC DNA]</scope>
    <source>
        <strain>K12 / MG1655 / ATCC 47076</strain>
    </source>
</reference>
<reference key="4">
    <citation type="journal article" date="2006" name="Mol. Syst. Biol.">
        <title>Highly accurate genome sequences of Escherichia coli K-12 strains MG1655 and W3110.</title>
        <authorList>
            <person name="Hayashi K."/>
            <person name="Morooka N."/>
            <person name="Yamamoto Y."/>
            <person name="Fujita K."/>
            <person name="Isono K."/>
            <person name="Choi S."/>
            <person name="Ohtsubo E."/>
            <person name="Baba T."/>
            <person name="Wanner B.L."/>
            <person name="Mori H."/>
            <person name="Horiuchi T."/>
        </authorList>
    </citation>
    <scope>NUCLEOTIDE SEQUENCE [LARGE SCALE GENOMIC DNA]</scope>
    <source>
        <strain>K12 / W3110 / ATCC 27325 / DSM 5911</strain>
    </source>
</reference>
<reference key="5">
    <citation type="journal article" date="1994" name="EMBO J.">
        <title>Yeast chromosome III: new gene functions.</title>
        <authorList>
            <person name="Koonin E.V."/>
            <person name="Bork P."/>
            <person name="Sander C."/>
        </authorList>
    </citation>
    <scope>SIMILARITY</scope>
</reference>
<reference key="6">
    <citation type="journal article" date="2004" name="Proteins">
        <title>Crystal structure of YIGZ, a conserved hypothetical protein from Escherichia coli K12 with a novel fold.</title>
        <authorList>
            <person name="Park F."/>
            <person name="Gajiwala K."/>
            <person name="Eroshkina G."/>
            <person name="Furlong E."/>
            <person name="He D."/>
            <person name="Batiyenko Y."/>
            <person name="Romero R."/>
            <person name="Christopher J."/>
            <person name="Badger J."/>
            <person name="Hendle J."/>
            <person name="Lin J."/>
            <person name="Peat T."/>
            <person name="Buchanan S."/>
        </authorList>
    </citation>
    <scope>X-RAY CRYSTALLOGRAPHY (2.8 ANGSTROMS)</scope>
    <scope>SUBUNIT</scope>
</reference>
<keyword id="KW-0002">3D-structure</keyword>
<keyword id="KW-1185">Reference proteome</keyword>
<sequence length="204" mass="21757">MESWLIPAAPVTVVEEIKKSRFITMLAHTDGVEAAKAFVESVRAEHPDARHHCVAWVAGAPDDSQQLGFSDDGEPAGTAGKPMLAQLMGSGVGEITAVVVRYYGGILLGTGGLVKAYGGGVNQALRQLTTQRKTPLTEYTLQCEYHQLTGIEALLGQCDGKIINSDYQAFVLLRVALPAAKVAEFSAKLADFSRGSLQLLAIEE</sequence>
<gene>
    <name type="primary">yigZ</name>
    <name type="ordered locus">b3848</name>
    <name type="ordered locus">JW5577</name>
</gene>
<feature type="chain" id="PRO_0000207659" description="IMPACT family member YigZ">
    <location>
        <begin position="1"/>
        <end position="204"/>
    </location>
</feature>
<feature type="sequence conflict" description="In Ref. 1; CAA38501." evidence="2" ref="1">
    <original>L</original>
    <variation>V</variation>
    <location>
        <position position="125"/>
    </location>
</feature>
<feature type="strand" evidence="3">
    <location>
        <begin position="4"/>
        <end position="9"/>
    </location>
</feature>
<feature type="strand" evidence="3">
    <location>
        <begin position="11"/>
        <end position="17"/>
    </location>
</feature>
<feature type="strand" evidence="3">
    <location>
        <begin position="20"/>
        <end position="28"/>
    </location>
</feature>
<feature type="helix" evidence="3">
    <location>
        <begin position="31"/>
        <end position="45"/>
    </location>
</feature>
<feature type="strand" evidence="3">
    <location>
        <begin position="54"/>
        <end position="57"/>
    </location>
</feature>
<feature type="strand" evidence="3">
    <location>
        <begin position="62"/>
        <end position="64"/>
    </location>
</feature>
<feature type="strand" evidence="3">
    <location>
        <begin position="68"/>
        <end position="70"/>
    </location>
</feature>
<feature type="strand" evidence="3">
    <location>
        <begin position="78"/>
        <end position="80"/>
    </location>
</feature>
<feature type="helix" evidence="3">
    <location>
        <begin position="81"/>
        <end position="90"/>
    </location>
</feature>
<feature type="strand" evidence="3">
    <location>
        <begin position="94"/>
        <end position="98"/>
    </location>
</feature>
<feature type="helix" evidence="3">
    <location>
        <begin position="110"/>
        <end position="125"/>
    </location>
</feature>
<feature type="strand" evidence="3">
    <location>
        <begin position="130"/>
        <end position="133"/>
    </location>
</feature>
<feature type="strand" evidence="3">
    <location>
        <begin position="137"/>
        <end position="143"/>
    </location>
</feature>
<feature type="turn" evidence="3">
    <location>
        <begin position="145"/>
        <end position="147"/>
    </location>
</feature>
<feature type="helix" evidence="3">
    <location>
        <begin position="148"/>
        <end position="157"/>
    </location>
</feature>
<feature type="strand" evidence="3">
    <location>
        <begin position="161"/>
        <end position="177"/>
    </location>
</feature>
<feature type="helix" evidence="3">
    <location>
        <begin position="182"/>
        <end position="192"/>
    </location>
</feature>
<feature type="turn" evidence="3">
    <location>
        <begin position="193"/>
        <end position="195"/>
    </location>
</feature>
<accession>P27862</accession>
<accession>Q2M8F1</accession>
<comment type="subunit">
    <text evidence="1">Monomer.</text>
</comment>
<comment type="interaction">
    <interactant intactId="EBI-561235">
        <id>P27862</id>
    </interactant>
    <interactant intactId="EBI-562154">
        <id>P0DTT0</id>
        <label>bipA</label>
    </interactant>
    <organismsDiffer>false</organismsDiffer>
    <experiments>2</experiments>
</comment>
<comment type="interaction">
    <interactant intactId="EBI-561235">
        <id>P27862</id>
    </interactant>
    <interactant intactId="EBI-544172">
        <id>P06612</id>
        <label>topA</label>
    </interactant>
    <organismsDiffer>false</organismsDiffer>
    <experiments>3</experiments>
</comment>
<comment type="similarity">
    <text evidence="2">Belongs to the IMPACT family.</text>
</comment>
<comment type="sequence caution" evidence="2">
    <conflict type="erroneous initiation">
        <sequence resource="EMBL-CDS" id="AAA67645"/>
    </conflict>
    <text>Extended N-terminus.</text>
</comment>
<comment type="sequence caution" evidence="2">
    <conflict type="erroneous initiation">
        <sequence resource="EMBL-CDS" id="CAA38501"/>
    </conflict>
    <text>Extended N-terminus.</text>
</comment>
<protein>
    <recommendedName>
        <fullName>IMPACT family member YigZ</fullName>
    </recommendedName>
</protein>
<organism>
    <name type="scientific">Escherichia coli (strain K12)</name>
    <dbReference type="NCBI Taxonomy" id="83333"/>
    <lineage>
        <taxon>Bacteria</taxon>
        <taxon>Pseudomonadati</taxon>
        <taxon>Pseudomonadota</taxon>
        <taxon>Gammaproteobacteria</taxon>
        <taxon>Enterobacterales</taxon>
        <taxon>Enterobacteriaceae</taxon>
        <taxon>Escherichia</taxon>
    </lineage>
</organism>
<evidence type="ECO:0000269" key="1">
    <source>
    </source>
</evidence>
<evidence type="ECO:0000305" key="2"/>
<evidence type="ECO:0007829" key="3">
    <source>
        <dbReference type="PDB" id="1VI7"/>
    </source>
</evidence>
<proteinExistence type="evidence at protein level"/>
<dbReference type="EMBL" id="X54687">
    <property type="protein sequence ID" value="CAA38501.1"/>
    <property type="status" value="ALT_INIT"/>
    <property type="molecule type" value="Genomic_DNA"/>
</dbReference>
<dbReference type="EMBL" id="M87049">
    <property type="protein sequence ID" value="AAA67645.1"/>
    <property type="status" value="ALT_INIT"/>
    <property type="molecule type" value="Genomic_DNA"/>
</dbReference>
<dbReference type="EMBL" id="U00096">
    <property type="protein sequence ID" value="AAC76851.2"/>
    <property type="molecule type" value="Genomic_DNA"/>
</dbReference>
<dbReference type="EMBL" id="AP009048">
    <property type="protein sequence ID" value="BAE77455.1"/>
    <property type="molecule type" value="Genomic_DNA"/>
</dbReference>
<dbReference type="PIR" id="S30739">
    <property type="entry name" value="S30739"/>
</dbReference>
<dbReference type="RefSeq" id="NP_418290.4">
    <property type="nucleotide sequence ID" value="NC_000913.3"/>
</dbReference>
<dbReference type="RefSeq" id="WP_001308167.1">
    <property type="nucleotide sequence ID" value="NZ_SSZK01000046.1"/>
</dbReference>
<dbReference type="PDB" id="1VI7">
    <property type="method" value="X-ray"/>
    <property type="resolution" value="2.80 A"/>
    <property type="chains" value="A=1-204"/>
</dbReference>
<dbReference type="PDBsum" id="1VI7"/>
<dbReference type="SMR" id="P27862"/>
<dbReference type="BioGRID" id="4261837">
    <property type="interactions" value="48"/>
</dbReference>
<dbReference type="BioGRID" id="852631">
    <property type="interactions" value="1"/>
</dbReference>
<dbReference type="DIP" id="DIP-12487N"/>
<dbReference type="FunCoup" id="P27862">
    <property type="interactions" value="108"/>
</dbReference>
<dbReference type="IntAct" id="P27862">
    <property type="interactions" value="3"/>
</dbReference>
<dbReference type="STRING" id="511145.b3848"/>
<dbReference type="MEROPS" id="M24.003"/>
<dbReference type="jPOST" id="P27862"/>
<dbReference type="PaxDb" id="511145-b3848"/>
<dbReference type="DNASU" id="948334"/>
<dbReference type="EnsemblBacteria" id="AAC76851">
    <property type="protein sequence ID" value="AAC76851"/>
    <property type="gene ID" value="b3848"/>
</dbReference>
<dbReference type="GeneID" id="948334"/>
<dbReference type="KEGG" id="ecj:JW5577"/>
<dbReference type="KEGG" id="eco:b3848"/>
<dbReference type="KEGG" id="ecoc:C3026_20805"/>
<dbReference type="PATRIC" id="fig|511145.12.peg.3962"/>
<dbReference type="EchoBASE" id="EB1447"/>
<dbReference type="eggNOG" id="COG1739">
    <property type="taxonomic scope" value="Bacteria"/>
</dbReference>
<dbReference type="HOGENOM" id="CLU_083552_0_0_6"/>
<dbReference type="InParanoid" id="P27862"/>
<dbReference type="OMA" id="WMTELTN"/>
<dbReference type="OrthoDB" id="9813771at2"/>
<dbReference type="PhylomeDB" id="P27862"/>
<dbReference type="BioCyc" id="EcoCyc:EG11484-MONOMER"/>
<dbReference type="EvolutionaryTrace" id="P27862"/>
<dbReference type="PRO" id="PR:P27862"/>
<dbReference type="Proteomes" id="UP000000625">
    <property type="component" value="Chromosome"/>
</dbReference>
<dbReference type="GO" id="GO:0005737">
    <property type="term" value="C:cytoplasm"/>
    <property type="evidence" value="ECO:0000318"/>
    <property type="project" value="GO_Central"/>
</dbReference>
<dbReference type="GO" id="GO:0043168">
    <property type="term" value="F:anion binding"/>
    <property type="evidence" value="ECO:0007669"/>
    <property type="project" value="UniProtKB-ARBA"/>
</dbReference>
<dbReference type="GO" id="GO:0032561">
    <property type="term" value="F:guanyl ribonucleotide binding"/>
    <property type="evidence" value="ECO:0007669"/>
    <property type="project" value="UniProtKB-ARBA"/>
</dbReference>
<dbReference type="GO" id="GO:0017111">
    <property type="term" value="F:ribonucleoside triphosphate phosphatase activity"/>
    <property type="evidence" value="ECO:0007669"/>
    <property type="project" value="UniProtKB-ARBA"/>
</dbReference>
<dbReference type="GO" id="GO:0006446">
    <property type="term" value="P:regulation of translational initiation"/>
    <property type="evidence" value="ECO:0000318"/>
    <property type="project" value="GO_Central"/>
</dbReference>
<dbReference type="Gene3D" id="3.30.70.240">
    <property type="match status" value="1"/>
</dbReference>
<dbReference type="Gene3D" id="3.30.230.30">
    <property type="entry name" value="Impact, N-terminal domain"/>
    <property type="match status" value="1"/>
</dbReference>
<dbReference type="InterPro" id="IPR035647">
    <property type="entry name" value="EFG_III/V"/>
</dbReference>
<dbReference type="InterPro" id="IPR023582">
    <property type="entry name" value="Impact"/>
</dbReference>
<dbReference type="InterPro" id="IPR001498">
    <property type="entry name" value="Impact_N"/>
</dbReference>
<dbReference type="InterPro" id="IPR036956">
    <property type="entry name" value="Impact_N_sf"/>
</dbReference>
<dbReference type="InterPro" id="IPR015796">
    <property type="entry name" value="Impact_YigZ-like"/>
</dbReference>
<dbReference type="InterPro" id="IPR020568">
    <property type="entry name" value="Ribosomal_Su5_D2-typ_SF"/>
</dbReference>
<dbReference type="InterPro" id="IPR015269">
    <property type="entry name" value="UPF0029_Impact_C"/>
</dbReference>
<dbReference type="InterPro" id="IPR020569">
    <property type="entry name" value="UPF0029_Impact_CS"/>
</dbReference>
<dbReference type="NCBIfam" id="TIGR00257">
    <property type="entry name" value="IMPACT_YIGZ"/>
    <property type="match status" value="1"/>
</dbReference>
<dbReference type="NCBIfam" id="NF008600">
    <property type="entry name" value="PRK11568.1"/>
    <property type="match status" value="1"/>
</dbReference>
<dbReference type="PANTHER" id="PTHR16301:SF20">
    <property type="entry name" value="IMPACT FAMILY MEMBER YIGZ"/>
    <property type="match status" value="1"/>
</dbReference>
<dbReference type="PANTHER" id="PTHR16301">
    <property type="entry name" value="IMPACT-RELATED"/>
    <property type="match status" value="1"/>
</dbReference>
<dbReference type="Pfam" id="PF09186">
    <property type="entry name" value="DUF1949"/>
    <property type="match status" value="1"/>
</dbReference>
<dbReference type="Pfam" id="PF01205">
    <property type="entry name" value="UPF0029"/>
    <property type="match status" value="1"/>
</dbReference>
<dbReference type="SUPFAM" id="SSF54980">
    <property type="entry name" value="EF-G C-terminal domain-like"/>
    <property type="match status" value="1"/>
</dbReference>
<dbReference type="SUPFAM" id="SSF54211">
    <property type="entry name" value="Ribosomal protein S5 domain 2-like"/>
    <property type="match status" value="1"/>
</dbReference>
<dbReference type="PROSITE" id="PS00910">
    <property type="entry name" value="UPF0029"/>
    <property type="match status" value="1"/>
</dbReference>